<evidence type="ECO:0000255" key="1">
    <source>
        <dbReference type="HAMAP-Rule" id="MF_00291"/>
    </source>
</evidence>
<evidence type="ECO:0000256" key="2">
    <source>
        <dbReference type="SAM" id="MobiDB-lite"/>
    </source>
</evidence>
<evidence type="ECO:0000305" key="3"/>
<protein>
    <recommendedName>
        <fullName evidence="1">Small ribosomal subunit protein uS2</fullName>
    </recommendedName>
    <alternativeName>
        <fullName evidence="3">30S ribosomal protein S2</fullName>
    </alternativeName>
</protein>
<keyword id="KW-0687">Ribonucleoprotein</keyword>
<keyword id="KW-0689">Ribosomal protein</keyword>
<sequence>MSKIPPVNVKDLLDAGVHFGHKTSRWNPKMAPYIYGERDEVHIIDLRQTAALMNVALNAIYETVKNDGKVLFVSTKIQASDIIAEYAEKCGQYYVNHRWLGGMLTNWKTISGSIEKLNKLEQTLENEEACIGYTKKEILDMNRKKDKLLLSLAGIRELHSKPDLIVIIDTNKEHIAISEAVRLDIPIVAVVDTNSNPDHIDYPIPGNDDAIRSIRFYCSLFADAALQGLEESMKASGVDLGSIQEHGDKNLAPKNVSKLKQAKKFSKTKNINEEANTEFEQALSDADEDKN</sequence>
<name>RS2_RICBR</name>
<comment type="similarity">
    <text evidence="1">Belongs to the universal ribosomal protein uS2 family.</text>
</comment>
<organism>
    <name type="scientific">Rickettsia bellii (strain RML369-C)</name>
    <dbReference type="NCBI Taxonomy" id="336407"/>
    <lineage>
        <taxon>Bacteria</taxon>
        <taxon>Pseudomonadati</taxon>
        <taxon>Pseudomonadota</taxon>
        <taxon>Alphaproteobacteria</taxon>
        <taxon>Rickettsiales</taxon>
        <taxon>Rickettsiaceae</taxon>
        <taxon>Rickettsieae</taxon>
        <taxon>Rickettsia</taxon>
        <taxon>belli group</taxon>
    </lineage>
</organism>
<gene>
    <name evidence="1" type="primary">rpsB</name>
    <name type="ordered locus">RBE_1282</name>
</gene>
<proteinExistence type="inferred from homology"/>
<reference key="1">
    <citation type="journal article" date="2006" name="PLoS Genet.">
        <title>Genome sequence of Rickettsia bellii illuminates the role of amoebae in gene exchanges between intracellular pathogens.</title>
        <authorList>
            <person name="Ogata H."/>
            <person name="La Scola B."/>
            <person name="Audic S."/>
            <person name="Renesto P."/>
            <person name="Blanc G."/>
            <person name="Robert C."/>
            <person name="Fournier P.-E."/>
            <person name="Claverie J.-M."/>
            <person name="Raoult D."/>
        </authorList>
    </citation>
    <scope>NUCLEOTIDE SEQUENCE [LARGE SCALE GENOMIC DNA]</scope>
    <source>
        <strain>RML369-C</strain>
    </source>
</reference>
<dbReference type="EMBL" id="CP000087">
    <property type="protein sequence ID" value="ABE05363.1"/>
    <property type="molecule type" value="Genomic_DNA"/>
</dbReference>
<dbReference type="RefSeq" id="WP_011477933.1">
    <property type="nucleotide sequence ID" value="NC_007940.1"/>
</dbReference>
<dbReference type="SMR" id="Q1RH01"/>
<dbReference type="KEGG" id="rbe:RBE_1282"/>
<dbReference type="eggNOG" id="COG0052">
    <property type="taxonomic scope" value="Bacteria"/>
</dbReference>
<dbReference type="HOGENOM" id="CLU_040318_2_1_5"/>
<dbReference type="OrthoDB" id="9808036at2"/>
<dbReference type="Proteomes" id="UP000001951">
    <property type="component" value="Chromosome"/>
</dbReference>
<dbReference type="GO" id="GO:0022627">
    <property type="term" value="C:cytosolic small ribosomal subunit"/>
    <property type="evidence" value="ECO:0007669"/>
    <property type="project" value="TreeGrafter"/>
</dbReference>
<dbReference type="GO" id="GO:0003735">
    <property type="term" value="F:structural constituent of ribosome"/>
    <property type="evidence" value="ECO:0007669"/>
    <property type="project" value="InterPro"/>
</dbReference>
<dbReference type="GO" id="GO:0006412">
    <property type="term" value="P:translation"/>
    <property type="evidence" value="ECO:0007669"/>
    <property type="project" value="UniProtKB-UniRule"/>
</dbReference>
<dbReference type="CDD" id="cd01425">
    <property type="entry name" value="RPS2"/>
    <property type="match status" value="1"/>
</dbReference>
<dbReference type="Gene3D" id="3.40.50.10490">
    <property type="entry name" value="Glucose-6-phosphate isomerase like protein, domain 1"/>
    <property type="match status" value="1"/>
</dbReference>
<dbReference type="Gene3D" id="1.10.287.610">
    <property type="entry name" value="Helix hairpin bin"/>
    <property type="match status" value="1"/>
</dbReference>
<dbReference type="HAMAP" id="MF_00291_B">
    <property type="entry name" value="Ribosomal_uS2_B"/>
    <property type="match status" value="1"/>
</dbReference>
<dbReference type="InterPro" id="IPR001865">
    <property type="entry name" value="Ribosomal_uS2"/>
</dbReference>
<dbReference type="InterPro" id="IPR005706">
    <property type="entry name" value="Ribosomal_uS2_bac/mit/plastid"/>
</dbReference>
<dbReference type="InterPro" id="IPR018130">
    <property type="entry name" value="Ribosomal_uS2_CS"/>
</dbReference>
<dbReference type="InterPro" id="IPR023591">
    <property type="entry name" value="Ribosomal_uS2_flav_dom_sf"/>
</dbReference>
<dbReference type="NCBIfam" id="TIGR01011">
    <property type="entry name" value="rpsB_bact"/>
    <property type="match status" value="1"/>
</dbReference>
<dbReference type="PANTHER" id="PTHR12534">
    <property type="entry name" value="30S RIBOSOMAL PROTEIN S2 PROKARYOTIC AND ORGANELLAR"/>
    <property type="match status" value="1"/>
</dbReference>
<dbReference type="PANTHER" id="PTHR12534:SF0">
    <property type="entry name" value="SMALL RIBOSOMAL SUBUNIT PROTEIN US2M"/>
    <property type="match status" value="1"/>
</dbReference>
<dbReference type="Pfam" id="PF00318">
    <property type="entry name" value="Ribosomal_S2"/>
    <property type="match status" value="1"/>
</dbReference>
<dbReference type="PRINTS" id="PR00395">
    <property type="entry name" value="RIBOSOMALS2"/>
</dbReference>
<dbReference type="SUPFAM" id="SSF52313">
    <property type="entry name" value="Ribosomal protein S2"/>
    <property type="match status" value="1"/>
</dbReference>
<dbReference type="PROSITE" id="PS00962">
    <property type="entry name" value="RIBOSOMAL_S2_1"/>
    <property type="match status" value="1"/>
</dbReference>
<accession>Q1RH01</accession>
<feature type="chain" id="PRO_0000278017" description="Small ribosomal subunit protein uS2">
    <location>
        <begin position="1"/>
        <end position="291"/>
    </location>
</feature>
<feature type="region of interest" description="Disordered" evidence="2">
    <location>
        <begin position="270"/>
        <end position="291"/>
    </location>
</feature>